<organism>
    <name type="scientific">Escherichia coli O1:K1 / APEC</name>
    <dbReference type="NCBI Taxonomy" id="405955"/>
    <lineage>
        <taxon>Bacteria</taxon>
        <taxon>Pseudomonadati</taxon>
        <taxon>Pseudomonadota</taxon>
        <taxon>Gammaproteobacteria</taxon>
        <taxon>Enterobacterales</taxon>
        <taxon>Enterobacteriaceae</taxon>
        <taxon>Escherichia</taxon>
    </lineage>
</organism>
<proteinExistence type="inferred from homology"/>
<feature type="chain" id="PRO_1000064463" description="Replication restart protein DnaT">
    <location>
        <begin position="1"/>
        <end position="179"/>
    </location>
</feature>
<feature type="region of interest" description="Disordered" evidence="2">
    <location>
        <begin position="156"/>
        <end position="179"/>
    </location>
</feature>
<reference key="1">
    <citation type="journal article" date="2007" name="J. Bacteriol.">
        <title>The genome sequence of avian pathogenic Escherichia coli strain O1:K1:H7 shares strong similarities with human extraintestinal pathogenic E. coli genomes.</title>
        <authorList>
            <person name="Johnson T.J."/>
            <person name="Kariyawasam S."/>
            <person name="Wannemuehler Y."/>
            <person name="Mangiamele P."/>
            <person name="Johnson S.J."/>
            <person name="Doetkott C."/>
            <person name="Skyberg J.A."/>
            <person name="Lynne A.M."/>
            <person name="Johnson J.R."/>
            <person name="Nolan L.K."/>
        </authorList>
    </citation>
    <scope>NUCLEOTIDE SEQUENCE [LARGE SCALE GENOMIC DNA]</scope>
</reference>
<gene>
    <name evidence="1" type="primary">dnaT</name>
    <name type="ordered locus">Ecok1_43810</name>
    <name type="ORF">APECO1_2062</name>
</gene>
<accession>A1AJN5</accession>
<comment type="function">
    <text evidence="1">Involved in the restart of stalled replication forks, which reloads the replicative helicase on sites other than the origin of replication. Can function in multiple replication restart pathways. Displaces ssDNA from a PriB-ssDNA complex. Probably forms a spiral filament on ssDNA.</text>
</comment>
<comment type="subunit">
    <text evidence="1">Homooligomerizes. Interacts with PriB. Component of the replication restart primosome. Primosome assembly occurs via a 'hand-off' mechanism. PriA binds to replication forks, subsequently PriB then DnaT bind; DnaT then displaces ssDNA to generate the helicase loading substrate.</text>
</comment>
<comment type="similarity">
    <text evidence="1">Belongs to the DnaT family.</text>
</comment>
<sequence>MSSRVLTPDVVGIDALVHDHQTVLAKAEGGVVAVFANNAPAFYAITPARLAELLALEEKLARPGSDVALDDQLYQEPQTAPVAVPMGKFAMYPDWQPDADFIRLAALWGVALRESVTAEELASFIAYWQAEGKVFHHVQWQQKLARSLQIGRASNGGLPKRDVNTVSEPDSQIPPGFRG</sequence>
<name>DNAT_ECOK1</name>
<evidence type="ECO:0000255" key="1">
    <source>
        <dbReference type="HAMAP-Rule" id="MF_01061"/>
    </source>
</evidence>
<evidence type="ECO:0000256" key="2">
    <source>
        <dbReference type="SAM" id="MobiDB-lite"/>
    </source>
</evidence>
<dbReference type="EMBL" id="CP000468">
    <property type="protein sequence ID" value="ABJ03875.1"/>
    <property type="molecule type" value="Genomic_DNA"/>
</dbReference>
<dbReference type="RefSeq" id="WP_001350779.1">
    <property type="nucleotide sequence ID" value="NZ_CADILS010000100.1"/>
</dbReference>
<dbReference type="BMRB" id="A1AJN5"/>
<dbReference type="SMR" id="A1AJN5"/>
<dbReference type="KEGG" id="ecv:APECO1_2062"/>
<dbReference type="HOGENOM" id="CLU_1501592_0_0_6"/>
<dbReference type="Proteomes" id="UP000008216">
    <property type="component" value="Chromosome"/>
</dbReference>
<dbReference type="GO" id="GO:1990077">
    <property type="term" value="C:primosome complex"/>
    <property type="evidence" value="ECO:0007669"/>
    <property type="project" value="UniProtKB-KW"/>
</dbReference>
<dbReference type="GO" id="GO:0006269">
    <property type="term" value="P:DNA replication, synthesis of primer"/>
    <property type="evidence" value="ECO:0007669"/>
    <property type="project" value="UniProtKB-UniRule"/>
</dbReference>
<dbReference type="Gene3D" id="1.10.8.1180">
    <property type="match status" value="1"/>
</dbReference>
<dbReference type="HAMAP" id="MF_01061">
    <property type="entry name" value="DnaT"/>
    <property type="match status" value="1"/>
</dbReference>
<dbReference type="InterPro" id="IPR020917">
    <property type="entry name" value="DnaT"/>
</dbReference>
<dbReference type="InterPro" id="IPR040480">
    <property type="entry name" value="DnaT_DNA_bind"/>
</dbReference>
<dbReference type="NCBIfam" id="NF002770">
    <property type="entry name" value="PRK02854.1"/>
    <property type="match status" value="1"/>
</dbReference>
<dbReference type="Pfam" id="PF17948">
    <property type="entry name" value="DnaT"/>
    <property type="match status" value="1"/>
</dbReference>
<protein>
    <recommendedName>
        <fullName evidence="1">Replication restart protein DnaT</fullName>
    </recommendedName>
</protein>
<keyword id="KW-0235">DNA replication</keyword>
<keyword id="KW-0238">DNA-binding</keyword>
<keyword id="KW-0639">Primosome</keyword>
<keyword id="KW-1185">Reference proteome</keyword>